<accession>Q8FK66</accession>
<sequence length="308" mass="34556">MFDPETLRTFIAVAETGSFSKAAERLCKTTATISYRIKLLEENTGVALFFRTTRSVTLTAAGEHLLCQARDWLSWLESMPSELQQVNDGVERQVNIVINNLLYNPQAVARLLAWLNERYPFTQFHISRQIYMGVWDSLLYEGFSLAIGVTGTEALANTFSLDPLGSVQWRFVMAADHPLANVEEPLTEAQLRRFPAVNIEDSARTLTKRVAWRLPGQKEIIVPDMETKIAAHLAGVGIGFLPKSLCQSMLDNQQLVSRVIPTMRPPSPLSLAWRKFGSGKAVEDIVTLFTQRRPEISGFLEIFGNPRS</sequence>
<reference key="1">
    <citation type="journal article" date="2002" name="Proc. Natl. Acad. Sci. U.S.A.">
        <title>Extensive mosaic structure revealed by the complete genome sequence of uropathogenic Escherichia coli.</title>
        <authorList>
            <person name="Welch R.A."/>
            <person name="Burland V."/>
            <person name="Plunkett G. III"/>
            <person name="Redford P."/>
            <person name="Roesch P."/>
            <person name="Rasko D."/>
            <person name="Buckles E.L."/>
            <person name="Liou S.-R."/>
            <person name="Boutin A."/>
            <person name="Hackett J."/>
            <person name="Stroud D."/>
            <person name="Mayhew G.F."/>
            <person name="Rose D.J."/>
            <person name="Zhou S."/>
            <person name="Schwartz D.C."/>
            <person name="Perna N.T."/>
            <person name="Mobley H.L.T."/>
            <person name="Donnenberg M.S."/>
            <person name="Blattner F.R."/>
        </authorList>
    </citation>
    <scope>NUCLEOTIDE SEQUENCE [LARGE SCALE GENOMIC DNA]</scope>
    <source>
        <strain>CFT073 / ATCC 700928 / UPEC</strain>
    </source>
</reference>
<dbReference type="EMBL" id="AE014075">
    <property type="protein sequence ID" value="AAN79096.1"/>
    <property type="molecule type" value="Genomic_DNA"/>
</dbReference>
<dbReference type="RefSeq" id="WP_000460119.1">
    <property type="nucleotide sequence ID" value="NZ_CP051263.1"/>
</dbReference>
<dbReference type="SMR" id="Q8FK66"/>
<dbReference type="STRING" id="199310.c0619"/>
<dbReference type="KEGG" id="ecc:c0619"/>
<dbReference type="eggNOG" id="COG0583">
    <property type="taxonomic scope" value="Bacteria"/>
</dbReference>
<dbReference type="HOGENOM" id="CLU_039613_35_1_6"/>
<dbReference type="BioCyc" id="ECOL199310:C0619-MONOMER"/>
<dbReference type="Proteomes" id="UP000001410">
    <property type="component" value="Chromosome"/>
</dbReference>
<dbReference type="GO" id="GO:0003677">
    <property type="term" value="F:DNA binding"/>
    <property type="evidence" value="ECO:0007669"/>
    <property type="project" value="UniProtKB-KW"/>
</dbReference>
<dbReference type="GO" id="GO:0003700">
    <property type="term" value="F:DNA-binding transcription factor activity"/>
    <property type="evidence" value="ECO:0007669"/>
    <property type="project" value="InterPro"/>
</dbReference>
<dbReference type="FunFam" id="3.40.190.290:FF:000005">
    <property type="entry name" value="HTH-type transcriptional activator AllS"/>
    <property type="match status" value="1"/>
</dbReference>
<dbReference type="FunFam" id="1.10.10.10:FF:000001">
    <property type="entry name" value="LysR family transcriptional regulator"/>
    <property type="match status" value="1"/>
</dbReference>
<dbReference type="Gene3D" id="3.40.190.290">
    <property type="match status" value="1"/>
</dbReference>
<dbReference type="Gene3D" id="1.10.10.10">
    <property type="entry name" value="Winged helix-like DNA-binding domain superfamily/Winged helix DNA-binding domain"/>
    <property type="match status" value="1"/>
</dbReference>
<dbReference type="InterPro" id="IPR050176">
    <property type="entry name" value="LTTR"/>
</dbReference>
<dbReference type="InterPro" id="IPR005119">
    <property type="entry name" value="LysR_subst-bd"/>
</dbReference>
<dbReference type="InterPro" id="IPR000847">
    <property type="entry name" value="Tscrpt_reg_HTH_LysR"/>
</dbReference>
<dbReference type="InterPro" id="IPR036388">
    <property type="entry name" value="WH-like_DNA-bd_sf"/>
</dbReference>
<dbReference type="InterPro" id="IPR036390">
    <property type="entry name" value="WH_DNA-bd_sf"/>
</dbReference>
<dbReference type="NCBIfam" id="NF007501">
    <property type="entry name" value="PRK10094.1"/>
    <property type="match status" value="1"/>
</dbReference>
<dbReference type="PANTHER" id="PTHR30579:SF0">
    <property type="entry name" value="HTH-TYPE TRANSCRIPTIONAL ACTIVATOR ALLS"/>
    <property type="match status" value="1"/>
</dbReference>
<dbReference type="PANTHER" id="PTHR30579">
    <property type="entry name" value="TRANSCRIPTIONAL REGULATOR"/>
    <property type="match status" value="1"/>
</dbReference>
<dbReference type="Pfam" id="PF00126">
    <property type="entry name" value="HTH_1"/>
    <property type="match status" value="1"/>
</dbReference>
<dbReference type="Pfam" id="PF03466">
    <property type="entry name" value="LysR_substrate"/>
    <property type="match status" value="1"/>
</dbReference>
<dbReference type="SUPFAM" id="SSF53850">
    <property type="entry name" value="Periplasmic binding protein-like II"/>
    <property type="match status" value="1"/>
</dbReference>
<dbReference type="SUPFAM" id="SSF46785">
    <property type="entry name" value="Winged helix' DNA-binding domain"/>
    <property type="match status" value="1"/>
</dbReference>
<dbReference type="PROSITE" id="PS50931">
    <property type="entry name" value="HTH_LYSR"/>
    <property type="match status" value="1"/>
</dbReference>
<protein>
    <recommendedName>
        <fullName>HTH-type transcriptional activator AllS</fullName>
    </recommendedName>
</protein>
<proteinExistence type="inferred from homology"/>
<feature type="chain" id="PRO_0000312808" description="HTH-type transcriptional activator AllS">
    <location>
        <begin position="1"/>
        <end position="308"/>
    </location>
</feature>
<feature type="domain" description="HTH lysR-type" evidence="2">
    <location>
        <begin position="2"/>
        <end position="59"/>
    </location>
</feature>
<feature type="DNA-binding region" description="H-T-H motif" evidence="2">
    <location>
        <begin position="19"/>
        <end position="38"/>
    </location>
</feature>
<comment type="function">
    <text evidence="1">Positive regulator essential for the expression of allD operon. Binds to the allD promoter (By similarity).</text>
</comment>
<comment type="similarity">
    <text evidence="3">Belongs to the LysR transcriptional regulatory family.</text>
</comment>
<name>ALLS_ECOL6</name>
<organism>
    <name type="scientific">Escherichia coli O6:H1 (strain CFT073 / ATCC 700928 / UPEC)</name>
    <dbReference type="NCBI Taxonomy" id="199310"/>
    <lineage>
        <taxon>Bacteria</taxon>
        <taxon>Pseudomonadati</taxon>
        <taxon>Pseudomonadota</taxon>
        <taxon>Gammaproteobacteria</taxon>
        <taxon>Enterobacterales</taxon>
        <taxon>Enterobacteriaceae</taxon>
        <taxon>Escherichia</taxon>
    </lineage>
</organism>
<keyword id="KW-0010">Activator</keyword>
<keyword id="KW-0238">DNA-binding</keyword>
<keyword id="KW-1185">Reference proteome</keyword>
<keyword id="KW-0804">Transcription</keyword>
<keyword id="KW-0805">Transcription regulation</keyword>
<evidence type="ECO:0000250" key="1"/>
<evidence type="ECO:0000255" key="2">
    <source>
        <dbReference type="PROSITE-ProRule" id="PRU00253"/>
    </source>
</evidence>
<evidence type="ECO:0000305" key="3"/>
<gene>
    <name type="primary">allS</name>
    <name type="ordered locus">c0619</name>
</gene>